<protein>
    <recommendedName>
        <fullName evidence="2">D-alanine--D-alanine ligase</fullName>
        <ecNumber evidence="2">6.3.2.4</ecNumber>
    </recommendedName>
    <alternativeName>
        <fullName evidence="2">D-Ala-D-Ala ligase</fullName>
    </alternativeName>
    <alternativeName>
        <fullName evidence="2">D-alanylalanine synthetase</fullName>
    </alternativeName>
</protein>
<organism>
    <name type="scientific">Thermus thermophilus (strain ATCC BAA-163 / DSM 7039 / HB27)</name>
    <dbReference type="NCBI Taxonomy" id="262724"/>
    <lineage>
        <taxon>Bacteria</taxon>
        <taxon>Thermotogati</taxon>
        <taxon>Deinococcota</taxon>
        <taxon>Deinococci</taxon>
        <taxon>Thermales</taxon>
        <taxon>Thermaceae</taxon>
        <taxon>Thermus</taxon>
    </lineage>
</organism>
<sequence>MRVLLIAGGVSPEHEVSLLSAEGVLRHMPFPTDLAVIARDGRWLLGEKALAALEAKAAPEGEHPFPPPLPWERYDVVFPLLHGRFGEDGTVQGFLELLGKPYVGAGVAASALCMDKDLSKRVLAQAGVPVVPWVAVRKGEPSMVPFDPPFFVKPANTGSSVGISRVERFQDLEAALALAFRYDEKAVVEKALSPVRELEVGVLGNVFGEASPVGEVRYEAPFYDYETKYTPGRAELLIPAPLDPGTQETVQELALKAYKVLGVRGMARVDFFLAEGEVYLNELNTIPGFTPTSMYPRLFEAGGVAYPELLRRLVELALT</sequence>
<reference key="1">
    <citation type="journal article" date="2004" name="Nat. Biotechnol.">
        <title>The genome sequence of the extreme thermophile Thermus thermophilus.</title>
        <authorList>
            <person name="Henne A."/>
            <person name="Brueggemann H."/>
            <person name="Raasch C."/>
            <person name="Wiezer A."/>
            <person name="Hartsch T."/>
            <person name="Liesegang H."/>
            <person name="Johann A."/>
            <person name="Lienard T."/>
            <person name="Gohl O."/>
            <person name="Martinez-Arias R."/>
            <person name="Jacobi C."/>
            <person name="Starkuviene V."/>
            <person name="Schlenczeck S."/>
            <person name="Dencker S."/>
            <person name="Huber R."/>
            <person name="Klenk H.-P."/>
            <person name="Kramer W."/>
            <person name="Merkl R."/>
            <person name="Gottschalk G."/>
            <person name="Fritz H.-J."/>
        </authorList>
    </citation>
    <scope>NUCLEOTIDE SEQUENCE [LARGE SCALE GENOMIC DNA]</scope>
    <source>
        <strain>ATCC BAA-163 / DSM 7039 / HB27</strain>
    </source>
</reference>
<keyword id="KW-0067">ATP-binding</keyword>
<keyword id="KW-0133">Cell shape</keyword>
<keyword id="KW-0961">Cell wall biogenesis/degradation</keyword>
<keyword id="KW-0963">Cytoplasm</keyword>
<keyword id="KW-0436">Ligase</keyword>
<keyword id="KW-0460">Magnesium</keyword>
<keyword id="KW-0464">Manganese</keyword>
<keyword id="KW-0479">Metal-binding</keyword>
<keyword id="KW-0547">Nucleotide-binding</keyword>
<keyword id="KW-0573">Peptidoglycan synthesis</keyword>
<accession>Q72IA9</accession>
<feature type="chain" id="PRO_0000341187" description="D-alanine--D-alanine ligase">
    <location>
        <begin position="1"/>
        <end position="319"/>
    </location>
</feature>
<feature type="domain" description="ATP-grasp" evidence="2">
    <location>
        <begin position="120"/>
        <end position="315"/>
    </location>
</feature>
<feature type="binding site" evidence="2">
    <location>
        <begin position="147"/>
        <end position="198"/>
    </location>
    <ligand>
        <name>ATP</name>
        <dbReference type="ChEBI" id="CHEBI:30616"/>
    </ligand>
</feature>
<feature type="binding site" evidence="2">
    <location>
        <position position="270"/>
    </location>
    <ligand>
        <name>Mg(2+)</name>
        <dbReference type="ChEBI" id="CHEBI:18420"/>
        <label>1</label>
    </ligand>
</feature>
<feature type="binding site" evidence="2">
    <location>
        <position position="282"/>
    </location>
    <ligand>
        <name>Mg(2+)</name>
        <dbReference type="ChEBI" id="CHEBI:18420"/>
        <label>1</label>
    </ligand>
</feature>
<feature type="binding site" evidence="2">
    <location>
        <position position="282"/>
    </location>
    <ligand>
        <name>Mg(2+)</name>
        <dbReference type="ChEBI" id="CHEBI:18420"/>
        <label>2</label>
    </ligand>
</feature>
<feature type="binding site" evidence="2">
    <location>
        <position position="284"/>
    </location>
    <ligand>
        <name>Mg(2+)</name>
        <dbReference type="ChEBI" id="CHEBI:18420"/>
        <label>2</label>
    </ligand>
</feature>
<name>DDL_THET2</name>
<gene>
    <name evidence="2" type="primary">ddl</name>
    <name type="ordered locus">TT_C1223</name>
</gene>
<evidence type="ECO:0000250" key="1"/>
<evidence type="ECO:0000255" key="2">
    <source>
        <dbReference type="HAMAP-Rule" id="MF_00047"/>
    </source>
</evidence>
<comment type="function">
    <text evidence="2">Cell wall formation.</text>
</comment>
<comment type="catalytic activity">
    <reaction evidence="2">
        <text>2 D-alanine + ATP = D-alanyl-D-alanine + ADP + phosphate + H(+)</text>
        <dbReference type="Rhea" id="RHEA:11224"/>
        <dbReference type="ChEBI" id="CHEBI:15378"/>
        <dbReference type="ChEBI" id="CHEBI:30616"/>
        <dbReference type="ChEBI" id="CHEBI:43474"/>
        <dbReference type="ChEBI" id="CHEBI:57416"/>
        <dbReference type="ChEBI" id="CHEBI:57822"/>
        <dbReference type="ChEBI" id="CHEBI:456216"/>
        <dbReference type="EC" id="6.3.2.4"/>
    </reaction>
</comment>
<comment type="cofactor">
    <cofactor evidence="1">
        <name>Mg(2+)</name>
        <dbReference type="ChEBI" id="CHEBI:18420"/>
    </cofactor>
    <cofactor evidence="1">
        <name>Mn(2+)</name>
        <dbReference type="ChEBI" id="CHEBI:29035"/>
    </cofactor>
    <text evidence="1">Binds 2 magnesium or manganese ions per subunit.</text>
</comment>
<comment type="pathway">
    <text evidence="2">Cell wall biogenesis; peptidoglycan biosynthesis.</text>
</comment>
<comment type="subcellular location">
    <subcellularLocation>
        <location evidence="2">Cytoplasm</location>
    </subcellularLocation>
</comment>
<comment type="similarity">
    <text evidence="2">Belongs to the D-alanine--D-alanine ligase family.</text>
</comment>
<dbReference type="EC" id="6.3.2.4" evidence="2"/>
<dbReference type="EMBL" id="AE017221">
    <property type="protein sequence ID" value="AAS81565.1"/>
    <property type="molecule type" value="Genomic_DNA"/>
</dbReference>
<dbReference type="RefSeq" id="WP_011173629.1">
    <property type="nucleotide sequence ID" value="NC_005835.1"/>
</dbReference>
<dbReference type="SMR" id="Q72IA9"/>
<dbReference type="KEGG" id="tth:TT_C1223"/>
<dbReference type="eggNOG" id="COG1181">
    <property type="taxonomic scope" value="Bacteria"/>
</dbReference>
<dbReference type="HOGENOM" id="CLU_039268_0_0_0"/>
<dbReference type="OrthoDB" id="9813261at2"/>
<dbReference type="UniPathway" id="UPA00219"/>
<dbReference type="Proteomes" id="UP000000592">
    <property type="component" value="Chromosome"/>
</dbReference>
<dbReference type="GO" id="GO:0005829">
    <property type="term" value="C:cytosol"/>
    <property type="evidence" value="ECO:0007669"/>
    <property type="project" value="TreeGrafter"/>
</dbReference>
<dbReference type="GO" id="GO:0005524">
    <property type="term" value="F:ATP binding"/>
    <property type="evidence" value="ECO:0007669"/>
    <property type="project" value="UniProtKB-KW"/>
</dbReference>
<dbReference type="GO" id="GO:0008716">
    <property type="term" value="F:D-alanine-D-alanine ligase activity"/>
    <property type="evidence" value="ECO:0007669"/>
    <property type="project" value="UniProtKB-UniRule"/>
</dbReference>
<dbReference type="GO" id="GO:0046872">
    <property type="term" value="F:metal ion binding"/>
    <property type="evidence" value="ECO:0007669"/>
    <property type="project" value="UniProtKB-KW"/>
</dbReference>
<dbReference type="GO" id="GO:0071555">
    <property type="term" value="P:cell wall organization"/>
    <property type="evidence" value="ECO:0007669"/>
    <property type="project" value="UniProtKB-KW"/>
</dbReference>
<dbReference type="GO" id="GO:0009252">
    <property type="term" value="P:peptidoglycan biosynthetic process"/>
    <property type="evidence" value="ECO:0007669"/>
    <property type="project" value="UniProtKB-UniRule"/>
</dbReference>
<dbReference type="GO" id="GO:0008360">
    <property type="term" value="P:regulation of cell shape"/>
    <property type="evidence" value="ECO:0007669"/>
    <property type="project" value="UniProtKB-KW"/>
</dbReference>
<dbReference type="FunFam" id="3.30.470.20:FF:000008">
    <property type="entry name" value="D-alanine--D-alanine ligase"/>
    <property type="match status" value="1"/>
</dbReference>
<dbReference type="Gene3D" id="3.40.50.20">
    <property type="match status" value="1"/>
</dbReference>
<dbReference type="Gene3D" id="3.30.1490.20">
    <property type="entry name" value="ATP-grasp fold, A domain"/>
    <property type="match status" value="1"/>
</dbReference>
<dbReference type="Gene3D" id="3.30.470.20">
    <property type="entry name" value="ATP-grasp fold, B domain"/>
    <property type="match status" value="1"/>
</dbReference>
<dbReference type="HAMAP" id="MF_00047">
    <property type="entry name" value="Dala_Dala_lig"/>
    <property type="match status" value="1"/>
</dbReference>
<dbReference type="InterPro" id="IPR011761">
    <property type="entry name" value="ATP-grasp"/>
</dbReference>
<dbReference type="InterPro" id="IPR013815">
    <property type="entry name" value="ATP_grasp_subdomain_1"/>
</dbReference>
<dbReference type="InterPro" id="IPR000291">
    <property type="entry name" value="D-Ala_lig_Van_CS"/>
</dbReference>
<dbReference type="InterPro" id="IPR005905">
    <property type="entry name" value="D_ala_D_ala"/>
</dbReference>
<dbReference type="InterPro" id="IPR011095">
    <property type="entry name" value="Dala_Dala_lig_C"/>
</dbReference>
<dbReference type="InterPro" id="IPR011127">
    <property type="entry name" value="Dala_Dala_lig_N"/>
</dbReference>
<dbReference type="InterPro" id="IPR016185">
    <property type="entry name" value="PreATP-grasp_dom_sf"/>
</dbReference>
<dbReference type="NCBIfam" id="TIGR01205">
    <property type="entry name" value="D_ala_D_alaTIGR"/>
    <property type="match status" value="1"/>
</dbReference>
<dbReference type="NCBIfam" id="NF002378">
    <property type="entry name" value="PRK01372.1"/>
    <property type="match status" value="1"/>
</dbReference>
<dbReference type="NCBIfam" id="NF002528">
    <property type="entry name" value="PRK01966.1-4"/>
    <property type="match status" value="1"/>
</dbReference>
<dbReference type="PANTHER" id="PTHR23132">
    <property type="entry name" value="D-ALANINE--D-ALANINE LIGASE"/>
    <property type="match status" value="1"/>
</dbReference>
<dbReference type="PANTHER" id="PTHR23132:SF25">
    <property type="entry name" value="D-ALANINE--D-ALANINE LIGASE A"/>
    <property type="match status" value="1"/>
</dbReference>
<dbReference type="Pfam" id="PF07478">
    <property type="entry name" value="Dala_Dala_lig_C"/>
    <property type="match status" value="1"/>
</dbReference>
<dbReference type="Pfam" id="PF01820">
    <property type="entry name" value="Dala_Dala_lig_N"/>
    <property type="match status" value="1"/>
</dbReference>
<dbReference type="PIRSF" id="PIRSF039102">
    <property type="entry name" value="Ddl/VanB"/>
    <property type="match status" value="1"/>
</dbReference>
<dbReference type="SUPFAM" id="SSF56059">
    <property type="entry name" value="Glutathione synthetase ATP-binding domain-like"/>
    <property type="match status" value="1"/>
</dbReference>
<dbReference type="SUPFAM" id="SSF52440">
    <property type="entry name" value="PreATP-grasp domain"/>
    <property type="match status" value="1"/>
</dbReference>
<dbReference type="PROSITE" id="PS50975">
    <property type="entry name" value="ATP_GRASP"/>
    <property type="match status" value="1"/>
</dbReference>
<dbReference type="PROSITE" id="PS00843">
    <property type="entry name" value="DALA_DALA_LIGASE_1"/>
    <property type="match status" value="1"/>
</dbReference>
<dbReference type="PROSITE" id="PS00844">
    <property type="entry name" value="DALA_DALA_LIGASE_2"/>
    <property type="match status" value="1"/>
</dbReference>
<proteinExistence type="inferred from homology"/>